<protein>
    <recommendedName>
        <fullName evidence="1">DNA-directed RNA polymerase subunit beta</fullName>
        <shortName evidence="1">RNAP subunit beta</shortName>
        <ecNumber evidence="1">2.7.7.6</ecNumber>
    </recommendedName>
    <alternativeName>
        <fullName evidence="1">RNA polymerase subunit beta</fullName>
    </alternativeName>
    <alternativeName>
        <fullName evidence="1">Transcriptase subunit beta</fullName>
    </alternativeName>
</protein>
<evidence type="ECO:0000255" key="1">
    <source>
        <dbReference type="HAMAP-Rule" id="MF_01321"/>
    </source>
</evidence>
<evidence type="ECO:0000256" key="2">
    <source>
        <dbReference type="SAM" id="MobiDB-lite"/>
    </source>
</evidence>
<name>RPOB_CLOK5</name>
<accession>A5N4N9</accession>
<dbReference type="EC" id="2.7.7.6" evidence="1"/>
<dbReference type="EMBL" id="CP000673">
    <property type="protein sequence ID" value="EDK32270.1"/>
    <property type="molecule type" value="Genomic_DNA"/>
</dbReference>
<dbReference type="RefSeq" id="WP_011988796.1">
    <property type="nucleotide sequence ID" value="NC_009706.1"/>
</dbReference>
<dbReference type="SMR" id="A5N4N9"/>
<dbReference type="STRING" id="431943.CKL_0216"/>
<dbReference type="KEGG" id="ckl:CKL_0216"/>
<dbReference type="eggNOG" id="COG0085">
    <property type="taxonomic scope" value="Bacteria"/>
</dbReference>
<dbReference type="HOGENOM" id="CLU_000524_4_1_9"/>
<dbReference type="Proteomes" id="UP000002411">
    <property type="component" value="Chromosome"/>
</dbReference>
<dbReference type="GO" id="GO:0000428">
    <property type="term" value="C:DNA-directed RNA polymerase complex"/>
    <property type="evidence" value="ECO:0007669"/>
    <property type="project" value="UniProtKB-KW"/>
</dbReference>
<dbReference type="GO" id="GO:0003677">
    <property type="term" value="F:DNA binding"/>
    <property type="evidence" value="ECO:0007669"/>
    <property type="project" value="UniProtKB-UniRule"/>
</dbReference>
<dbReference type="GO" id="GO:0003899">
    <property type="term" value="F:DNA-directed RNA polymerase activity"/>
    <property type="evidence" value="ECO:0007669"/>
    <property type="project" value="UniProtKB-UniRule"/>
</dbReference>
<dbReference type="GO" id="GO:0032549">
    <property type="term" value="F:ribonucleoside binding"/>
    <property type="evidence" value="ECO:0007669"/>
    <property type="project" value="InterPro"/>
</dbReference>
<dbReference type="GO" id="GO:0006351">
    <property type="term" value="P:DNA-templated transcription"/>
    <property type="evidence" value="ECO:0007669"/>
    <property type="project" value="UniProtKB-UniRule"/>
</dbReference>
<dbReference type="CDD" id="cd00653">
    <property type="entry name" value="RNA_pol_B_RPB2"/>
    <property type="match status" value="1"/>
</dbReference>
<dbReference type="FunFam" id="3.90.1800.10:FF:000001">
    <property type="entry name" value="DNA-directed RNA polymerase subunit beta"/>
    <property type="match status" value="1"/>
</dbReference>
<dbReference type="Gene3D" id="2.40.50.100">
    <property type="match status" value="1"/>
</dbReference>
<dbReference type="Gene3D" id="2.40.50.150">
    <property type="match status" value="1"/>
</dbReference>
<dbReference type="Gene3D" id="3.90.1100.10">
    <property type="match status" value="2"/>
</dbReference>
<dbReference type="Gene3D" id="2.40.270.10">
    <property type="entry name" value="DNA-directed RNA polymerase, subunit 2, domain 6"/>
    <property type="match status" value="1"/>
</dbReference>
<dbReference type="Gene3D" id="3.90.1800.10">
    <property type="entry name" value="RNA polymerase alpha subunit dimerisation domain"/>
    <property type="match status" value="1"/>
</dbReference>
<dbReference type="Gene3D" id="3.90.1110.10">
    <property type="entry name" value="RNA polymerase Rpb2, domain 2"/>
    <property type="match status" value="1"/>
</dbReference>
<dbReference type="HAMAP" id="MF_01321">
    <property type="entry name" value="RNApol_bact_RpoB"/>
    <property type="match status" value="1"/>
</dbReference>
<dbReference type="InterPro" id="IPR019462">
    <property type="entry name" value="DNA-dir_RNA_pol_bsu_external_1"/>
</dbReference>
<dbReference type="InterPro" id="IPR015712">
    <property type="entry name" value="DNA-dir_RNA_pol_su2"/>
</dbReference>
<dbReference type="InterPro" id="IPR007120">
    <property type="entry name" value="DNA-dir_RNAP_su2_dom"/>
</dbReference>
<dbReference type="InterPro" id="IPR037033">
    <property type="entry name" value="DNA-dir_RNAP_su2_hyb_sf"/>
</dbReference>
<dbReference type="InterPro" id="IPR010243">
    <property type="entry name" value="RNA_pol_bsu_bac"/>
</dbReference>
<dbReference type="InterPro" id="IPR007121">
    <property type="entry name" value="RNA_pol_bsu_CS"/>
</dbReference>
<dbReference type="InterPro" id="IPR007644">
    <property type="entry name" value="RNA_pol_bsu_protrusion"/>
</dbReference>
<dbReference type="InterPro" id="IPR007642">
    <property type="entry name" value="RNA_pol_Rpb2_2"/>
</dbReference>
<dbReference type="InterPro" id="IPR037034">
    <property type="entry name" value="RNA_pol_Rpb2_2_sf"/>
</dbReference>
<dbReference type="InterPro" id="IPR007645">
    <property type="entry name" value="RNA_pol_Rpb2_3"/>
</dbReference>
<dbReference type="InterPro" id="IPR007641">
    <property type="entry name" value="RNA_pol_Rpb2_7"/>
</dbReference>
<dbReference type="InterPro" id="IPR014724">
    <property type="entry name" value="RNA_pol_RPB2_OB-fold"/>
</dbReference>
<dbReference type="NCBIfam" id="NF001616">
    <property type="entry name" value="PRK00405.1"/>
    <property type="match status" value="1"/>
</dbReference>
<dbReference type="NCBIfam" id="TIGR02013">
    <property type="entry name" value="rpoB"/>
    <property type="match status" value="1"/>
</dbReference>
<dbReference type="PANTHER" id="PTHR20856">
    <property type="entry name" value="DNA-DIRECTED RNA POLYMERASE I SUBUNIT 2"/>
    <property type="match status" value="1"/>
</dbReference>
<dbReference type="Pfam" id="PF04563">
    <property type="entry name" value="RNA_pol_Rpb2_1"/>
    <property type="match status" value="1"/>
</dbReference>
<dbReference type="Pfam" id="PF04561">
    <property type="entry name" value="RNA_pol_Rpb2_2"/>
    <property type="match status" value="2"/>
</dbReference>
<dbReference type="Pfam" id="PF04565">
    <property type="entry name" value="RNA_pol_Rpb2_3"/>
    <property type="match status" value="1"/>
</dbReference>
<dbReference type="Pfam" id="PF10385">
    <property type="entry name" value="RNA_pol_Rpb2_45"/>
    <property type="match status" value="1"/>
</dbReference>
<dbReference type="Pfam" id="PF00562">
    <property type="entry name" value="RNA_pol_Rpb2_6"/>
    <property type="match status" value="1"/>
</dbReference>
<dbReference type="Pfam" id="PF04560">
    <property type="entry name" value="RNA_pol_Rpb2_7"/>
    <property type="match status" value="1"/>
</dbReference>
<dbReference type="SUPFAM" id="SSF64484">
    <property type="entry name" value="beta and beta-prime subunits of DNA dependent RNA-polymerase"/>
    <property type="match status" value="1"/>
</dbReference>
<dbReference type="PROSITE" id="PS01166">
    <property type="entry name" value="RNA_POL_BETA"/>
    <property type="match status" value="1"/>
</dbReference>
<gene>
    <name evidence="1" type="primary">rpoB</name>
    <name type="ordered locus">CKL_0216</name>
</gene>
<keyword id="KW-0240">DNA-directed RNA polymerase</keyword>
<keyword id="KW-0548">Nucleotidyltransferase</keyword>
<keyword id="KW-1185">Reference proteome</keyword>
<keyword id="KW-0804">Transcription</keyword>
<keyword id="KW-0808">Transferase</keyword>
<feature type="chain" id="PRO_1000086367" description="DNA-directed RNA polymerase subunit beta">
    <location>
        <begin position="1"/>
        <end position="1234"/>
    </location>
</feature>
<feature type="region of interest" description="Disordered" evidence="2">
    <location>
        <begin position="1189"/>
        <end position="1212"/>
    </location>
</feature>
<feature type="compositionally biased region" description="Acidic residues" evidence="2">
    <location>
        <begin position="1195"/>
        <end position="1212"/>
    </location>
</feature>
<reference key="1">
    <citation type="journal article" date="2008" name="Proc. Natl. Acad. Sci. U.S.A.">
        <title>The genome of Clostridium kluyveri, a strict anaerobe with unique metabolic features.</title>
        <authorList>
            <person name="Seedorf H."/>
            <person name="Fricke W.F."/>
            <person name="Veith B."/>
            <person name="Brueggemann H."/>
            <person name="Liesegang H."/>
            <person name="Strittmatter A."/>
            <person name="Miethke M."/>
            <person name="Buckel W."/>
            <person name="Hinderberger J."/>
            <person name="Li F."/>
            <person name="Hagemeier C."/>
            <person name="Thauer R.K."/>
            <person name="Gottschalk G."/>
        </authorList>
    </citation>
    <scope>NUCLEOTIDE SEQUENCE [LARGE SCALE GENOMIC DNA]</scope>
    <source>
        <strain>ATCC 8527 / DSM 555 / NBRC 12016 / NCIMB 10680 / K1</strain>
    </source>
</reference>
<proteinExistence type="inferred from homology"/>
<organism>
    <name type="scientific">Clostridium kluyveri (strain ATCC 8527 / DSM 555 / NBRC 12016 / NCIMB 10680 / K1)</name>
    <dbReference type="NCBI Taxonomy" id="431943"/>
    <lineage>
        <taxon>Bacteria</taxon>
        <taxon>Bacillati</taxon>
        <taxon>Bacillota</taxon>
        <taxon>Clostridia</taxon>
        <taxon>Eubacteriales</taxon>
        <taxon>Clostridiaceae</taxon>
        <taxon>Clostridium</taxon>
    </lineage>
</organism>
<sequence>MVHPVRVGKRTRMSFSRLKEIGHMPNLIEVQLDSYNWFLKEGLQEVFEDINPIQDYTANLNLEFVGYKLDMDNIKYSVEECKERDSTYAAPLKVKVRLLNKETGEVKEQEVFMGDFPLMTEQGTFIINGAERVIVSQLVRSPGVYYDVSVDKTGKNLFSSTVIPNRGAWLEYETDSNNIIYVRIDKTRKLPITILVRAMGHGTDTEITNFFGEDERLKATIEKDNTKTHEEALLEIYKRLRPGEPPTVDSARSLIESLFFDPKRYDLSRVGRYKFNKKLSLHLRIVNQISTGDVVNPETGEILVQKGEKIDREKAVQIQQCGINSVDIEIEDTTLRVIGNNFVNINNFIDFNIDDLNIKESVYYPALKQILDNYSSEESIREQIKKNIHNLIPKHIIRDDIYATVSYELGLAYGVGHTDDIDHLGNRRLRSVGELLQNQFRIGLSRMERVVKERMTIQDQEVITPQALINIRPVAASIKEFFGSSQLSQFMDQTNPLSELTHKRRLSALGPGGLSRERAGFEVRDVHHSHYGRMCPIETPEGPNIGLINSLATYAKVNEYGFIETPYRKVNKKEKIVTNEIVYMTADEEDEYLIGRANEPIDENGKFVDSKITVRDKEDVIVVPAEDVDYMDLSPRQLVSVATAMIPFLENDDASRALMGSNMQRQAVPLLKPQAPVVGTGIEYKAAVDSGVLPKARNAGVVSYVCANEIRVRRDSDGGTDIYRLLKFQRSNQGTCINQRPIVEKGEIVQQGTVLADGPSTDLGEIALGKNIRMGFTTWEGYNYEDAMLISEELVKKDVFTSIHIEEYESEARDTKLGPEEITRDIPNVGEDALKDIDDRGIIKIGAEVRAGDILVGKVTPKGETELTAEERLLRAIFGEKAREVRDTSLRVPHGEAGIIVDVKVFTRKNGDELSPGVNKLVRCYIAQKRKISVGDKMAGRHGNKGVISRVLPEEDMPFLPDGRPLEICLNPLGVPSRMNIGQVLEVHLGWAASELGWHIATPVFDGATEEDIIECLKKAGYREDGKTILYDGRTGEPFNRPVTVGYMYILKLAHLVDDKIHARSTGPYSLVTQQPLGGKAQFGGQRFGEMEVWALEAYGAAHTLQEILTVKSDDVVGRVKTYEAIVKGENIPEPGVPESFKVLIKELQALCLDVKVLNDDNQEIKLKESVDEEIENLDVNIEGNEDFVLSSQDNDYEEPEENDEEDELNLDYDDLTLDDLKDDLKIEDFNDEH</sequence>
<comment type="function">
    <text evidence="1">DNA-dependent RNA polymerase catalyzes the transcription of DNA into RNA using the four ribonucleoside triphosphates as substrates.</text>
</comment>
<comment type="catalytic activity">
    <reaction evidence="1">
        <text>RNA(n) + a ribonucleoside 5'-triphosphate = RNA(n+1) + diphosphate</text>
        <dbReference type="Rhea" id="RHEA:21248"/>
        <dbReference type="Rhea" id="RHEA-COMP:14527"/>
        <dbReference type="Rhea" id="RHEA-COMP:17342"/>
        <dbReference type="ChEBI" id="CHEBI:33019"/>
        <dbReference type="ChEBI" id="CHEBI:61557"/>
        <dbReference type="ChEBI" id="CHEBI:140395"/>
        <dbReference type="EC" id="2.7.7.6"/>
    </reaction>
</comment>
<comment type="subunit">
    <text evidence="1">The RNAP catalytic core consists of 2 alpha, 1 beta, 1 beta' and 1 omega subunit. When a sigma factor is associated with the core the holoenzyme is formed, which can initiate transcription.</text>
</comment>
<comment type="similarity">
    <text evidence="1">Belongs to the RNA polymerase beta chain family.</text>
</comment>